<organism>
    <name type="scientific">Enterobacter sp. (strain 638)</name>
    <dbReference type="NCBI Taxonomy" id="399742"/>
    <lineage>
        <taxon>Bacteria</taxon>
        <taxon>Pseudomonadati</taxon>
        <taxon>Pseudomonadota</taxon>
        <taxon>Gammaproteobacteria</taxon>
        <taxon>Enterobacterales</taxon>
        <taxon>Enterobacteriaceae</taxon>
        <taxon>Enterobacter</taxon>
    </lineage>
</organism>
<comment type="function">
    <text evidence="1">Catalyzes the attachment of serine to tRNA(Ser). Is also able to aminoacylate tRNA(Sec) with serine, to form the misacylated tRNA L-seryl-tRNA(Sec), which will be further converted into selenocysteinyl-tRNA(Sec).</text>
</comment>
<comment type="catalytic activity">
    <reaction evidence="1">
        <text>tRNA(Ser) + L-serine + ATP = L-seryl-tRNA(Ser) + AMP + diphosphate + H(+)</text>
        <dbReference type="Rhea" id="RHEA:12292"/>
        <dbReference type="Rhea" id="RHEA-COMP:9669"/>
        <dbReference type="Rhea" id="RHEA-COMP:9703"/>
        <dbReference type="ChEBI" id="CHEBI:15378"/>
        <dbReference type="ChEBI" id="CHEBI:30616"/>
        <dbReference type="ChEBI" id="CHEBI:33019"/>
        <dbReference type="ChEBI" id="CHEBI:33384"/>
        <dbReference type="ChEBI" id="CHEBI:78442"/>
        <dbReference type="ChEBI" id="CHEBI:78533"/>
        <dbReference type="ChEBI" id="CHEBI:456215"/>
        <dbReference type="EC" id="6.1.1.11"/>
    </reaction>
</comment>
<comment type="catalytic activity">
    <reaction evidence="1">
        <text>tRNA(Sec) + L-serine + ATP = L-seryl-tRNA(Sec) + AMP + diphosphate + H(+)</text>
        <dbReference type="Rhea" id="RHEA:42580"/>
        <dbReference type="Rhea" id="RHEA-COMP:9742"/>
        <dbReference type="Rhea" id="RHEA-COMP:10128"/>
        <dbReference type="ChEBI" id="CHEBI:15378"/>
        <dbReference type="ChEBI" id="CHEBI:30616"/>
        <dbReference type="ChEBI" id="CHEBI:33019"/>
        <dbReference type="ChEBI" id="CHEBI:33384"/>
        <dbReference type="ChEBI" id="CHEBI:78442"/>
        <dbReference type="ChEBI" id="CHEBI:78533"/>
        <dbReference type="ChEBI" id="CHEBI:456215"/>
        <dbReference type="EC" id="6.1.1.11"/>
    </reaction>
</comment>
<comment type="pathway">
    <text evidence="1">Aminoacyl-tRNA biosynthesis; selenocysteinyl-tRNA(Sec) biosynthesis; L-seryl-tRNA(Sec) from L-serine and tRNA(Sec): step 1/1.</text>
</comment>
<comment type="subunit">
    <text evidence="1">Homodimer. The tRNA molecule binds across the dimer.</text>
</comment>
<comment type="subcellular location">
    <subcellularLocation>
        <location evidence="1">Cytoplasm</location>
    </subcellularLocation>
</comment>
<comment type="domain">
    <text evidence="1">Consists of two distinct domains, a catalytic core and a N-terminal extension that is involved in tRNA binding.</text>
</comment>
<comment type="similarity">
    <text evidence="1">Belongs to the class-II aminoacyl-tRNA synthetase family. Type-1 seryl-tRNA synthetase subfamily.</text>
</comment>
<evidence type="ECO:0000255" key="1">
    <source>
        <dbReference type="HAMAP-Rule" id="MF_00176"/>
    </source>
</evidence>
<feature type="chain" id="PRO_1000058353" description="Serine--tRNA ligase">
    <location>
        <begin position="1"/>
        <end position="430"/>
    </location>
</feature>
<feature type="binding site" evidence="1">
    <location>
        <begin position="237"/>
        <end position="239"/>
    </location>
    <ligand>
        <name>L-serine</name>
        <dbReference type="ChEBI" id="CHEBI:33384"/>
    </ligand>
</feature>
<feature type="binding site" evidence="1">
    <location>
        <begin position="268"/>
        <end position="270"/>
    </location>
    <ligand>
        <name>ATP</name>
        <dbReference type="ChEBI" id="CHEBI:30616"/>
    </ligand>
</feature>
<feature type="binding site" evidence="1">
    <location>
        <position position="291"/>
    </location>
    <ligand>
        <name>L-serine</name>
        <dbReference type="ChEBI" id="CHEBI:33384"/>
    </ligand>
</feature>
<feature type="binding site" evidence="1">
    <location>
        <begin position="355"/>
        <end position="358"/>
    </location>
    <ligand>
        <name>ATP</name>
        <dbReference type="ChEBI" id="CHEBI:30616"/>
    </ligand>
</feature>
<feature type="binding site" evidence="1">
    <location>
        <position position="391"/>
    </location>
    <ligand>
        <name>L-serine</name>
        <dbReference type="ChEBI" id="CHEBI:33384"/>
    </ligand>
</feature>
<dbReference type="EC" id="6.1.1.11" evidence="1"/>
<dbReference type="EMBL" id="CP000653">
    <property type="protein sequence ID" value="ABP60097.1"/>
    <property type="molecule type" value="Genomic_DNA"/>
</dbReference>
<dbReference type="RefSeq" id="WP_012016814.1">
    <property type="nucleotide sequence ID" value="NC_009436.1"/>
</dbReference>
<dbReference type="SMR" id="A4W8R7"/>
<dbReference type="STRING" id="399742.Ent638_1417"/>
<dbReference type="KEGG" id="ent:Ent638_1417"/>
<dbReference type="eggNOG" id="COG0172">
    <property type="taxonomic scope" value="Bacteria"/>
</dbReference>
<dbReference type="HOGENOM" id="CLU_023797_1_1_6"/>
<dbReference type="OrthoDB" id="9804647at2"/>
<dbReference type="UniPathway" id="UPA00906">
    <property type="reaction ID" value="UER00895"/>
</dbReference>
<dbReference type="Proteomes" id="UP000000230">
    <property type="component" value="Chromosome"/>
</dbReference>
<dbReference type="GO" id="GO:0005737">
    <property type="term" value="C:cytoplasm"/>
    <property type="evidence" value="ECO:0007669"/>
    <property type="project" value="UniProtKB-SubCell"/>
</dbReference>
<dbReference type="GO" id="GO:0005524">
    <property type="term" value="F:ATP binding"/>
    <property type="evidence" value="ECO:0007669"/>
    <property type="project" value="UniProtKB-UniRule"/>
</dbReference>
<dbReference type="GO" id="GO:0004828">
    <property type="term" value="F:serine-tRNA ligase activity"/>
    <property type="evidence" value="ECO:0007669"/>
    <property type="project" value="UniProtKB-UniRule"/>
</dbReference>
<dbReference type="GO" id="GO:0016260">
    <property type="term" value="P:selenocysteine biosynthetic process"/>
    <property type="evidence" value="ECO:0007669"/>
    <property type="project" value="UniProtKB-UniRule"/>
</dbReference>
<dbReference type="GO" id="GO:0006434">
    <property type="term" value="P:seryl-tRNA aminoacylation"/>
    <property type="evidence" value="ECO:0007669"/>
    <property type="project" value="UniProtKB-UniRule"/>
</dbReference>
<dbReference type="CDD" id="cd00770">
    <property type="entry name" value="SerRS_core"/>
    <property type="match status" value="1"/>
</dbReference>
<dbReference type="FunFam" id="1.10.287.40:FF:000001">
    <property type="entry name" value="Serine--tRNA ligase"/>
    <property type="match status" value="1"/>
</dbReference>
<dbReference type="FunFam" id="3.30.930.10:FF:000018">
    <property type="entry name" value="Serine--tRNA ligase"/>
    <property type="match status" value="1"/>
</dbReference>
<dbReference type="Gene3D" id="3.30.930.10">
    <property type="entry name" value="Bira Bifunctional Protein, Domain 2"/>
    <property type="match status" value="1"/>
</dbReference>
<dbReference type="Gene3D" id="1.10.287.40">
    <property type="entry name" value="Serine-tRNA synthetase, tRNA binding domain"/>
    <property type="match status" value="1"/>
</dbReference>
<dbReference type="HAMAP" id="MF_00176">
    <property type="entry name" value="Ser_tRNA_synth_type1"/>
    <property type="match status" value="1"/>
</dbReference>
<dbReference type="InterPro" id="IPR002314">
    <property type="entry name" value="aa-tRNA-synt_IIb"/>
</dbReference>
<dbReference type="InterPro" id="IPR006195">
    <property type="entry name" value="aa-tRNA-synth_II"/>
</dbReference>
<dbReference type="InterPro" id="IPR045864">
    <property type="entry name" value="aa-tRNA-synth_II/BPL/LPL"/>
</dbReference>
<dbReference type="InterPro" id="IPR002317">
    <property type="entry name" value="Ser-tRNA-ligase_type_1"/>
</dbReference>
<dbReference type="InterPro" id="IPR015866">
    <property type="entry name" value="Ser-tRNA-synth_1_N"/>
</dbReference>
<dbReference type="InterPro" id="IPR042103">
    <property type="entry name" value="SerRS_1_N_sf"/>
</dbReference>
<dbReference type="InterPro" id="IPR033729">
    <property type="entry name" value="SerRS_core"/>
</dbReference>
<dbReference type="InterPro" id="IPR010978">
    <property type="entry name" value="tRNA-bd_arm"/>
</dbReference>
<dbReference type="NCBIfam" id="TIGR00414">
    <property type="entry name" value="serS"/>
    <property type="match status" value="1"/>
</dbReference>
<dbReference type="PANTHER" id="PTHR43697:SF1">
    <property type="entry name" value="SERINE--TRNA LIGASE"/>
    <property type="match status" value="1"/>
</dbReference>
<dbReference type="PANTHER" id="PTHR43697">
    <property type="entry name" value="SERYL-TRNA SYNTHETASE"/>
    <property type="match status" value="1"/>
</dbReference>
<dbReference type="Pfam" id="PF02403">
    <property type="entry name" value="Seryl_tRNA_N"/>
    <property type="match status" value="1"/>
</dbReference>
<dbReference type="Pfam" id="PF00587">
    <property type="entry name" value="tRNA-synt_2b"/>
    <property type="match status" value="1"/>
</dbReference>
<dbReference type="PIRSF" id="PIRSF001529">
    <property type="entry name" value="Ser-tRNA-synth_IIa"/>
    <property type="match status" value="1"/>
</dbReference>
<dbReference type="PRINTS" id="PR00981">
    <property type="entry name" value="TRNASYNTHSER"/>
</dbReference>
<dbReference type="SUPFAM" id="SSF55681">
    <property type="entry name" value="Class II aaRS and biotin synthetases"/>
    <property type="match status" value="1"/>
</dbReference>
<dbReference type="SUPFAM" id="SSF46589">
    <property type="entry name" value="tRNA-binding arm"/>
    <property type="match status" value="1"/>
</dbReference>
<dbReference type="PROSITE" id="PS50862">
    <property type="entry name" value="AA_TRNA_LIGASE_II"/>
    <property type="match status" value="1"/>
</dbReference>
<sequence length="430" mass="48447">MLDPNLLRNEPDAVAEKLARRGFKLDVDKLRALEERRKVLQVQTENLQAERNSRSKSIGQAKARGEDIEPLRLEVNKLGEELDQAKTELELLLAEIRDIALAIPNTPDDSVPVGKDENDNVEVKRWGTPREFDFEVRDHVTLGEMHAGLDFAAAVKLTGARFVVMKGQIAHLHRALAQFMLDLHTEQHGYSETYVPYLVNHDTLYGTGQLPKFAGDLFHTRPLDEEAESSNYALIPTAEVPLTNLVRDEIIDEDDLPIKLTAHSPCFRSEAGSYGRDTRGLIRMHQFDKVEMVQIVRPEVSMDALEEMTGHAEKVLELLGLPYRRMALCTGDMGFGATKTFDLEVWVPAQNTYREISSCSNVGDFQARRMQARCRTKADKKTRLVHTLNGSGLAVGRALVAVMENYQQADGRIEIPEVLRPYMKGQQYIG</sequence>
<gene>
    <name evidence="1" type="primary">serS</name>
    <name type="ordered locus">Ent638_1417</name>
</gene>
<protein>
    <recommendedName>
        <fullName evidence="1">Serine--tRNA ligase</fullName>
        <ecNumber evidence="1">6.1.1.11</ecNumber>
    </recommendedName>
    <alternativeName>
        <fullName evidence="1">Seryl-tRNA synthetase</fullName>
        <shortName evidence="1">SerRS</shortName>
    </alternativeName>
    <alternativeName>
        <fullName evidence="1">Seryl-tRNA(Ser/Sec) synthetase</fullName>
    </alternativeName>
</protein>
<accession>A4W8R7</accession>
<proteinExistence type="inferred from homology"/>
<name>SYS_ENT38</name>
<reference key="1">
    <citation type="journal article" date="2010" name="PLoS Genet.">
        <title>Genome sequence of the plant growth promoting endophytic bacterium Enterobacter sp. 638.</title>
        <authorList>
            <person name="Taghavi S."/>
            <person name="van der Lelie D."/>
            <person name="Hoffman A."/>
            <person name="Zhang Y.B."/>
            <person name="Walla M.D."/>
            <person name="Vangronsveld J."/>
            <person name="Newman L."/>
            <person name="Monchy S."/>
        </authorList>
    </citation>
    <scope>NUCLEOTIDE SEQUENCE [LARGE SCALE GENOMIC DNA]</scope>
    <source>
        <strain>638</strain>
    </source>
</reference>
<keyword id="KW-0030">Aminoacyl-tRNA synthetase</keyword>
<keyword id="KW-0067">ATP-binding</keyword>
<keyword id="KW-0963">Cytoplasm</keyword>
<keyword id="KW-0436">Ligase</keyword>
<keyword id="KW-0547">Nucleotide-binding</keyword>
<keyword id="KW-0648">Protein biosynthesis</keyword>